<reference key="1">
    <citation type="journal article" date="2005" name="J. Bacteriol.">
        <title>Insights on evolution of virulence and resistance from the complete genome analysis of an early methicillin-resistant Staphylococcus aureus strain and a biofilm-producing methicillin-resistant Staphylococcus epidermidis strain.</title>
        <authorList>
            <person name="Gill S.R."/>
            <person name="Fouts D.E."/>
            <person name="Archer G.L."/>
            <person name="Mongodin E.F."/>
            <person name="DeBoy R.T."/>
            <person name="Ravel J."/>
            <person name="Paulsen I.T."/>
            <person name="Kolonay J.F."/>
            <person name="Brinkac L.M."/>
            <person name="Beanan M.J."/>
            <person name="Dodson R.J."/>
            <person name="Daugherty S.C."/>
            <person name="Madupu R."/>
            <person name="Angiuoli S.V."/>
            <person name="Durkin A.S."/>
            <person name="Haft D.H."/>
            <person name="Vamathevan J.J."/>
            <person name="Khouri H."/>
            <person name="Utterback T.R."/>
            <person name="Lee C."/>
            <person name="Dimitrov G."/>
            <person name="Jiang L."/>
            <person name="Qin H."/>
            <person name="Weidman J."/>
            <person name="Tran K."/>
            <person name="Kang K.H."/>
            <person name="Hance I.R."/>
            <person name="Nelson K.E."/>
            <person name="Fraser C.M."/>
        </authorList>
    </citation>
    <scope>NUCLEOTIDE SEQUENCE [LARGE SCALE GENOMIC DNA]</scope>
    <source>
        <strain>COL</strain>
    </source>
</reference>
<gene>
    <name type="primary">clpB</name>
    <name type="ordered locus">SACOL0979</name>
</gene>
<keyword id="KW-0067">ATP-binding</keyword>
<keyword id="KW-0143">Chaperone</keyword>
<keyword id="KW-0175">Coiled coil</keyword>
<keyword id="KW-0963">Cytoplasm</keyword>
<keyword id="KW-0547">Nucleotide-binding</keyword>
<keyword id="KW-0677">Repeat</keyword>
<keyword id="KW-0346">Stress response</keyword>
<protein>
    <recommendedName>
        <fullName>Chaperone protein ClpB</fullName>
    </recommendedName>
</protein>
<evidence type="ECO:0000250" key="1"/>
<evidence type="ECO:0000255" key="2">
    <source>
        <dbReference type="PROSITE-ProRule" id="PRU01251"/>
    </source>
</evidence>
<evidence type="ECO:0000305" key="3"/>
<comment type="function">
    <text evidence="1">Part of a stress-induced multi-chaperone system, it is involved in the recovery of the cell from heat-induced damage, in cooperation with DnaK, DnaJ and GrpE. Acts before DnaK, in the processing of protein aggregates. Protein binding stimulates the ATPase activity; ATP hydrolysis unfolds the denatured protein aggregates, which probably helps expose new hydrophobic binding sites on the surface of ClpB-bound aggregates, contributing to the solubilization and refolding of denatured protein aggregates by DnaK (By similarity).</text>
</comment>
<comment type="subunit">
    <text evidence="1">Homohexamer. The oligomerization is ATP-dependent (By similarity).</text>
</comment>
<comment type="subcellular location">
    <subcellularLocation>
        <location evidence="3">Cytoplasm</location>
    </subcellularLocation>
</comment>
<comment type="domain">
    <text evidence="1">The Clp repeat (R) domain probably functions as a substrate-discriminating domain, recruiting aggregated proteins to the ClpB hexamer and/or stabilizing bound proteins. The NBD2 domain is responsible for oligomerization, whereas the NBD1 domain stabilizes the hexamer probably in an ATP-dependent manner. The movement of the coiled-coil domain is essential for ClpB ability to rescue proteins from an aggregated state, probably by pulling apart large aggregated proteins, which are bound between the coiled-coils motifs of adjacent ClpB subunits in the functional hexamer (By similarity).</text>
</comment>
<comment type="similarity">
    <text evidence="3">Belongs to the ClpA/ClpB family.</text>
</comment>
<dbReference type="EMBL" id="CP000046">
    <property type="protein sequence ID" value="AAW37946.1"/>
    <property type="molecule type" value="Genomic_DNA"/>
</dbReference>
<dbReference type="RefSeq" id="WP_000353955.1">
    <property type="nucleotide sequence ID" value="NZ_JBGOFO010000002.1"/>
</dbReference>
<dbReference type="SMR" id="Q5HHB0"/>
<dbReference type="KEGG" id="sac:SACOL0979"/>
<dbReference type="HOGENOM" id="CLU_005070_4_0_9"/>
<dbReference type="Proteomes" id="UP000000530">
    <property type="component" value="Chromosome"/>
</dbReference>
<dbReference type="GO" id="GO:0005737">
    <property type="term" value="C:cytoplasm"/>
    <property type="evidence" value="ECO:0007669"/>
    <property type="project" value="UniProtKB-SubCell"/>
</dbReference>
<dbReference type="GO" id="GO:0005524">
    <property type="term" value="F:ATP binding"/>
    <property type="evidence" value="ECO:0007669"/>
    <property type="project" value="UniProtKB-KW"/>
</dbReference>
<dbReference type="GO" id="GO:0016887">
    <property type="term" value="F:ATP hydrolysis activity"/>
    <property type="evidence" value="ECO:0007669"/>
    <property type="project" value="InterPro"/>
</dbReference>
<dbReference type="GO" id="GO:0034605">
    <property type="term" value="P:cellular response to heat"/>
    <property type="evidence" value="ECO:0007669"/>
    <property type="project" value="TreeGrafter"/>
</dbReference>
<dbReference type="GO" id="GO:0042026">
    <property type="term" value="P:protein refolding"/>
    <property type="evidence" value="ECO:0007669"/>
    <property type="project" value="InterPro"/>
</dbReference>
<dbReference type="CDD" id="cd00009">
    <property type="entry name" value="AAA"/>
    <property type="match status" value="1"/>
</dbReference>
<dbReference type="CDD" id="cd19499">
    <property type="entry name" value="RecA-like_ClpB_Hsp104-like"/>
    <property type="match status" value="1"/>
</dbReference>
<dbReference type="FunFam" id="3.40.50.300:FF:000120">
    <property type="entry name" value="ATP-dependent chaperone ClpB"/>
    <property type="match status" value="1"/>
</dbReference>
<dbReference type="FunFam" id="3.40.50.300:FF:000025">
    <property type="entry name" value="ATP-dependent Clp protease subunit"/>
    <property type="match status" value="1"/>
</dbReference>
<dbReference type="FunFam" id="3.40.50.300:FF:000010">
    <property type="entry name" value="Chaperone clpB 1, putative"/>
    <property type="match status" value="1"/>
</dbReference>
<dbReference type="Gene3D" id="1.10.8.60">
    <property type="match status" value="1"/>
</dbReference>
<dbReference type="Gene3D" id="1.10.1780.10">
    <property type="entry name" value="Clp, N-terminal domain"/>
    <property type="match status" value="1"/>
</dbReference>
<dbReference type="Gene3D" id="3.40.50.300">
    <property type="entry name" value="P-loop containing nucleotide triphosphate hydrolases"/>
    <property type="match status" value="3"/>
</dbReference>
<dbReference type="InterPro" id="IPR003593">
    <property type="entry name" value="AAA+_ATPase"/>
</dbReference>
<dbReference type="InterPro" id="IPR003959">
    <property type="entry name" value="ATPase_AAA_core"/>
</dbReference>
<dbReference type="InterPro" id="IPR017730">
    <property type="entry name" value="Chaperonin_ClpB"/>
</dbReference>
<dbReference type="InterPro" id="IPR019489">
    <property type="entry name" value="Clp_ATPase_C"/>
</dbReference>
<dbReference type="InterPro" id="IPR036628">
    <property type="entry name" value="Clp_N_dom_sf"/>
</dbReference>
<dbReference type="InterPro" id="IPR004176">
    <property type="entry name" value="Clp_R_dom"/>
</dbReference>
<dbReference type="InterPro" id="IPR001270">
    <property type="entry name" value="ClpA/B"/>
</dbReference>
<dbReference type="InterPro" id="IPR018368">
    <property type="entry name" value="ClpA/B_CS1"/>
</dbReference>
<dbReference type="InterPro" id="IPR028299">
    <property type="entry name" value="ClpA/B_CS2"/>
</dbReference>
<dbReference type="InterPro" id="IPR041546">
    <property type="entry name" value="ClpA/ClpB_AAA_lid"/>
</dbReference>
<dbReference type="InterPro" id="IPR050130">
    <property type="entry name" value="ClpA_ClpB"/>
</dbReference>
<dbReference type="InterPro" id="IPR027417">
    <property type="entry name" value="P-loop_NTPase"/>
</dbReference>
<dbReference type="NCBIfam" id="TIGR03346">
    <property type="entry name" value="chaperone_ClpB"/>
    <property type="match status" value="1"/>
</dbReference>
<dbReference type="PANTHER" id="PTHR11638">
    <property type="entry name" value="ATP-DEPENDENT CLP PROTEASE"/>
    <property type="match status" value="1"/>
</dbReference>
<dbReference type="PANTHER" id="PTHR11638:SF18">
    <property type="entry name" value="HEAT SHOCK PROTEIN 104"/>
    <property type="match status" value="1"/>
</dbReference>
<dbReference type="Pfam" id="PF00004">
    <property type="entry name" value="AAA"/>
    <property type="match status" value="1"/>
</dbReference>
<dbReference type="Pfam" id="PF07724">
    <property type="entry name" value="AAA_2"/>
    <property type="match status" value="1"/>
</dbReference>
<dbReference type="Pfam" id="PF17871">
    <property type="entry name" value="AAA_lid_9"/>
    <property type="match status" value="1"/>
</dbReference>
<dbReference type="Pfam" id="PF02861">
    <property type="entry name" value="Clp_N"/>
    <property type="match status" value="2"/>
</dbReference>
<dbReference type="Pfam" id="PF10431">
    <property type="entry name" value="ClpB_D2-small"/>
    <property type="match status" value="1"/>
</dbReference>
<dbReference type="PRINTS" id="PR00300">
    <property type="entry name" value="CLPPROTEASEA"/>
</dbReference>
<dbReference type="SMART" id="SM00382">
    <property type="entry name" value="AAA"/>
    <property type="match status" value="2"/>
</dbReference>
<dbReference type="SMART" id="SM01086">
    <property type="entry name" value="ClpB_D2-small"/>
    <property type="match status" value="1"/>
</dbReference>
<dbReference type="SUPFAM" id="SSF81923">
    <property type="entry name" value="Double Clp-N motif"/>
    <property type="match status" value="1"/>
</dbReference>
<dbReference type="SUPFAM" id="SSF52540">
    <property type="entry name" value="P-loop containing nucleoside triphosphate hydrolases"/>
    <property type="match status" value="2"/>
</dbReference>
<dbReference type="PROSITE" id="PS51903">
    <property type="entry name" value="CLP_R"/>
    <property type="match status" value="1"/>
</dbReference>
<dbReference type="PROSITE" id="PS00870">
    <property type="entry name" value="CLPAB_1"/>
    <property type="match status" value="1"/>
</dbReference>
<dbReference type="PROSITE" id="PS00871">
    <property type="entry name" value="CLPAB_2"/>
    <property type="match status" value="1"/>
</dbReference>
<feature type="chain" id="PRO_0000191175" description="Chaperone protein ClpB">
    <location>
        <begin position="1"/>
        <end position="869"/>
    </location>
</feature>
<feature type="domain" description="Clp R" evidence="2">
    <location>
        <begin position="3"/>
        <end position="145"/>
    </location>
</feature>
<feature type="region of interest" description="Repeat 1" evidence="2">
    <location>
        <begin position="6"/>
        <end position="71"/>
    </location>
</feature>
<feature type="region of interest" description="Repeat 2" evidence="2">
    <location>
        <begin position="85"/>
        <end position="145"/>
    </location>
</feature>
<feature type="region of interest" description="NBD1" evidence="1">
    <location>
        <begin position="158"/>
        <end position="339"/>
    </location>
</feature>
<feature type="region of interest" description="Linker" evidence="1">
    <location>
        <begin position="340"/>
        <end position="549"/>
    </location>
</feature>
<feature type="region of interest" description="NBD2" evidence="1">
    <location>
        <begin position="559"/>
        <end position="771"/>
    </location>
</feature>
<feature type="region of interest" description="C-terminal" evidence="1">
    <location>
        <begin position="772"/>
        <end position="869"/>
    </location>
</feature>
<feature type="coiled-coil region" evidence="1">
    <location>
        <begin position="390"/>
        <end position="524"/>
    </location>
</feature>
<feature type="binding site" evidence="1">
    <location>
        <begin position="205"/>
        <end position="212"/>
    </location>
    <ligand>
        <name>ATP</name>
        <dbReference type="ChEBI" id="CHEBI:30616"/>
        <label>1</label>
    </ligand>
</feature>
<feature type="binding site" evidence="1">
    <location>
        <begin position="609"/>
        <end position="616"/>
    </location>
    <ligand>
        <name>ATP</name>
        <dbReference type="ChEBI" id="CHEBI:30616"/>
        <label>2</label>
    </ligand>
</feature>
<accession>Q5HHB0</accession>
<proteinExistence type="inferred from homology"/>
<name>CLPB_STAAC</name>
<sequence length="869" mass="98303">MDINKMTYAVQSALQQAVELSQQHKLQNIEIEAILSAALNESESLYKSILERANIEVDQLNKAYEDKLNTYASVEGDNIQYGQYISQQANQLITKAESYMKEYEDEYISMEHILRSAMDIDQTTKHYINNKVEVIKEIIKKVRGGNHVTSQNPEVNYEALAKYGRDLVEEVRQGKMDPVIGRDEEIRNTIRILSRKTKNNPVLIGEPGVGKTAIVEGLAQRIVKKDVPESLLDKTVFELDLSALVAGAKYRGEFEERLKAVLKEVKESDGRIILFIDEIHMLVGAGKTDGAMDAGNMLKPMLARGELHCIGATTLNEYREYIEKDSALERRFQKVAVSEPDVEDTISILRGLKERYEVYHGVRIQDRALVAAAELSDRYITDRFLPDKAIDLVDQACATIRTEMGSNPTELDQVNRRVMQLEIEESALKNESDNASKQRLQELQEELANEKEKQAALQSRVESEKEKIANLQEKRAQLDESRQALEDAQTNNNLEKAAELQYGTIPQLEKELRELEDNFQDEQGEDTDRMIREVVTDEEIGDIVSQWTGIPVSKLVETEREKLLHLSDILHKRVVGQDKAVDLVSDAVVRARAGIKDPNRPIGSFLFLGPTGVGKTELAKSLAASLFDSEKHMIRIDMSEYMEKHAVSRLIGAPPGYIGHDEGGQLTEAVRRNPYSVILLDEVEKAHTDVFNVLLQILDEGRLTDSKGRSVDFKNTIIIMTSNIGSQVLLENVKETGEITESTEKAVMTSLNAYFKPEILNRMDDIVLFKPLSIDDMSMIVDKILTQLNIRLLEQRISIEVSDDAKAWLGQEAYEPQYGARPLKRFVQRQIETPLARMMIKEGFPEGTTIKVNLNSDNNLTFNVEKIHE</sequence>
<organism>
    <name type="scientific">Staphylococcus aureus (strain COL)</name>
    <dbReference type="NCBI Taxonomy" id="93062"/>
    <lineage>
        <taxon>Bacteria</taxon>
        <taxon>Bacillati</taxon>
        <taxon>Bacillota</taxon>
        <taxon>Bacilli</taxon>
        <taxon>Bacillales</taxon>
        <taxon>Staphylococcaceae</taxon>
        <taxon>Staphylococcus</taxon>
    </lineage>
</organism>